<keyword id="KW-0443">Lipid metabolism</keyword>
<keyword id="KW-0472">Membrane</keyword>
<keyword id="KW-0521">NADP</keyword>
<keyword id="KW-0560">Oxidoreductase</keyword>
<keyword id="KW-1267">Proteomics identification</keyword>
<keyword id="KW-1185">Reference proteome</keyword>
<keyword id="KW-0716">Sensory transduction</keyword>
<keyword id="KW-0812">Transmembrane</keyword>
<keyword id="KW-1133">Transmembrane helix</keyword>
<keyword id="KW-0844">Vision</keyword>
<evidence type="ECO:0000250" key="1">
    <source>
        <dbReference type="UniProtKB" id="Q12634"/>
    </source>
</evidence>
<evidence type="ECO:0000250" key="2">
    <source>
        <dbReference type="UniProtKB" id="Q9N126"/>
    </source>
</evidence>
<evidence type="ECO:0000255" key="3"/>
<evidence type="ECO:0000255" key="4">
    <source>
        <dbReference type="PROSITE-ProRule" id="PRU10001"/>
    </source>
</evidence>
<evidence type="ECO:0000269" key="5">
    <source>
    </source>
</evidence>
<evidence type="ECO:0000305" key="6"/>
<evidence type="ECO:0000305" key="7">
    <source>
    </source>
</evidence>
<comment type="function">
    <text evidence="2">Retinol dehydrogenase with a clear preference for NADP. Converts all-trans-retinal to all-trans-retinol. May play a role in the regeneration of visual pigment at high light intensity (By similarity).</text>
</comment>
<comment type="catalytic activity">
    <reaction evidence="2">
        <text>all-trans-retinol + NADP(+) = all-trans-retinal + NADPH + H(+)</text>
        <dbReference type="Rhea" id="RHEA:25033"/>
        <dbReference type="ChEBI" id="CHEBI:15378"/>
        <dbReference type="ChEBI" id="CHEBI:17336"/>
        <dbReference type="ChEBI" id="CHEBI:17898"/>
        <dbReference type="ChEBI" id="CHEBI:57783"/>
        <dbReference type="ChEBI" id="CHEBI:58349"/>
        <dbReference type="EC" id="1.1.1.300"/>
    </reaction>
</comment>
<comment type="subcellular location">
    <subcellularLocation>
        <location evidence="7">Membrane</location>
        <topology evidence="6">Multi-pass membrane protein</topology>
    </subcellularLocation>
</comment>
<comment type="tissue specificity">
    <text evidence="5">Detected in photoreceptor outer segments in the retina (at protein level).</text>
</comment>
<comment type="similarity">
    <text evidence="6">Belongs to the short-chain dehydrogenases/reductases (SDR) family.</text>
</comment>
<comment type="sequence caution" evidence="6">
    <conflict type="frameshift">
        <sequence resource="EMBL-CDS" id="BAB14782"/>
    </conflict>
</comment>
<reference key="1">
    <citation type="journal article" date="2000" name="J. Biol. Chem.">
        <title>Identification and characterization of all-trans-retinol dehydrogenase from photoreceptor outer segments, the visual cycle enzyme that reduces all-trans-retinal to all-trans-retinol.</title>
        <authorList>
            <person name="Rattner A."/>
            <person name="Smallwood P.M."/>
            <person name="Nathans J."/>
        </authorList>
    </citation>
    <scope>NUCLEOTIDE SEQUENCE [MRNA]</scope>
    <scope>SUBCELLULAR LOCATION</scope>
    <scope>TISSUE SPECIFICITY</scope>
    <source>
        <tissue>Retina</tissue>
    </source>
</reference>
<reference key="2">
    <citation type="journal article" date="2004" name="Nat. Genet.">
        <title>Complete sequencing and characterization of 21,243 full-length human cDNAs.</title>
        <authorList>
            <person name="Ota T."/>
            <person name="Suzuki Y."/>
            <person name="Nishikawa T."/>
            <person name="Otsuki T."/>
            <person name="Sugiyama T."/>
            <person name="Irie R."/>
            <person name="Wakamatsu A."/>
            <person name="Hayashi K."/>
            <person name="Sato H."/>
            <person name="Nagai K."/>
            <person name="Kimura K."/>
            <person name="Makita H."/>
            <person name="Sekine M."/>
            <person name="Obayashi M."/>
            <person name="Nishi T."/>
            <person name="Shibahara T."/>
            <person name="Tanaka T."/>
            <person name="Ishii S."/>
            <person name="Yamamoto J."/>
            <person name="Saito K."/>
            <person name="Kawai Y."/>
            <person name="Isono Y."/>
            <person name="Nakamura Y."/>
            <person name="Nagahari K."/>
            <person name="Murakami K."/>
            <person name="Yasuda T."/>
            <person name="Iwayanagi T."/>
            <person name="Wagatsuma M."/>
            <person name="Shiratori A."/>
            <person name="Sudo H."/>
            <person name="Hosoiri T."/>
            <person name="Kaku Y."/>
            <person name="Kodaira H."/>
            <person name="Kondo H."/>
            <person name="Sugawara M."/>
            <person name="Takahashi M."/>
            <person name="Kanda K."/>
            <person name="Yokoi T."/>
            <person name="Furuya T."/>
            <person name="Kikkawa E."/>
            <person name="Omura Y."/>
            <person name="Abe K."/>
            <person name="Kamihara K."/>
            <person name="Katsuta N."/>
            <person name="Sato K."/>
            <person name="Tanikawa M."/>
            <person name="Yamazaki M."/>
            <person name="Ninomiya K."/>
            <person name="Ishibashi T."/>
            <person name="Yamashita H."/>
            <person name="Murakawa K."/>
            <person name="Fujimori K."/>
            <person name="Tanai H."/>
            <person name="Kimata M."/>
            <person name="Watanabe M."/>
            <person name="Hiraoka S."/>
            <person name="Chiba Y."/>
            <person name="Ishida S."/>
            <person name="Ono Y."/>
            <person name="Takiguchi S."/>
            <person name="Watanabe S."/>
            <person name="Yosida M."/>
            <person name="Hotuta T."/>
            <person name="Kusano J."/>
            <person name="Kanehori K."/>
            <person name="Takahashi-Fujii A."/>
            <person name="Hara H."/>
            <person name="Tanase T.-O."/>
            <person name="Nomura Y."/>
            <person name="Togiya S."/>
            <person name="Komai F."/>
            <person name="Hara R."/>
            <person name="Takeuchi K."/>
            <person name="Arita M."/>
            <person name="Imose N."/>
            <person name="Musashino K."/>
            <person name="Yuuki H."/>
            <person name="Oshima A."/>
            <person name="Sasaki N."/>
            <person name="Aotsuka S."/>
            <person name="Yoshikawa Y."/>
            <person name="Matsunawa H."/>
            <person name="Ichihara T."/>
            <person name="Shiohata N."/>
            <person name="Sano S."/>
            <person name="Moriya S."/>
            <person name="Momiyama H."/>
            <person name="Satoh N."/>
            <person name="Takami S."/>
            <person name="Terashima Y."/>
            <person name="Suzuki O."/>
            <person name="Nakagawa S."/>
            <person name="Senoh A."/>
            <person name="Mizoguchi H."/>
            <person name="Goto Y."/>
            <person name="Shimizu F."/>
            <person name="Wakebe H."/>
            <person name="Hishigaki H."/>
            <person name="Watanabe T."/>
            <person name="Sugiyama A."/>
            <person name="Takemoto M."/>
            <person name="Kawakami B."/>
            <person name="Yamazaki M."/>
            <person name="Watanabe K."/>
            <person name="Kumagai A."/>
            <person name="Itakura S."/>
            <person name="Fukuzumi Y."/>
            <person name="Fujimori Y."/>
            <person name="Komiyama M."/>
            <person name="Tashiro H."/>
            <person name="Tanigami A."/>
            <person name="Fujiwara T."/>
            <person name="Ono T."/>
            <person name="Yamada K."/>
            <person name="Fujii Y."/>
            <person name="Ozaki K."/>
            <person name="Hirao M."/>
            <person name="Ohmori Y."/>
            <person name="Kawabata A."/>
            <person name="Hikiji T."/>
            <person name="Kobatake N."/>
            <person name="Inagaki H."/>
            <person name="Ikema Y."/>
            <person name="Okamoto S."/>
            <person name="Okitani R."/>
            <person name="Kawakami T."/>
            <person name="Noguchi S."/>
            <person name="Itoh T."/>
            <person name="Shigeta K."/>
            <person name="Senba T."/>
            <person name="Matsumura K."/>
            <person name="Nakajima Y."/>
            <person name="Mizuno T."/>
            <person name="Morinaga M."/>
            <person name="Sasaki M."/>
            <person name="Togashi T."/>
            <person name="Oyama M."/>
            <person name="Hata H."/>
            <person name="Watanabe M."/>
            <person name="Komatsu T."/>
            <person name="Mizushima-Sugano J."/>
            <person name="Satoh T."/>
            <person name="Shirai Y."/>
            <person name="Takahashi Y."/>
            <person name="Nakagawa K."/>
            <person name="Okumura K."/>
            <person name="Nagase T."/>
            <person name="Nomura N."/>
            <person name="Kikuchi H."/>
            <person name="Masuho Y."/>
            <person name="Yamashita R."/>
            <person name="Nakai K."/>
            <person name="Yada T."/>
            <person name="Nakamura Y."/>
            <person name="Ohara O."/>
            <person name="Isogai T."/>
            <person name="Sugano S."/>
        </authorList>
    </citation>
    <scope>NUCLEOTIDE SEQUENCE [LARGE SCALE MRNA]</scope>
</reference>
<gene>
    <name type="primary">RDH8</name>
    <name type="synonym">PRRDH</name>
    <name type="synonym">SDR28C2</name>
</gene>
<feature type="chain" id="PRO_0000305972" description="Retinol dehydrogenase 8">
    <location>
        <begin position="1"/>
        <end position="311"/>
    </location>
</feature>
<feature type="transmembrane region" description="Helical" evidence="3">
    <location>
        <begin position="86"/>
        <end position="106"/>
    </location>
</feature>
<feature type="transmembrane region" description="Helical" evidence="3">
    <location>
        <begin position="137"/>
        <end position="157"/>
    </location>
</feature>
<feature type="transmembrane region" description="Helical" evidence="3">
    <location>
        <begin position="169"/>
        <end position="189"/>
    </location>
</feature>
<feature type="active site" description="Proton acceptor" evidence="4">
    <location>
        <position position="155"/>
    </location>
</feature>
<feature type="binding site" evidence="1">
    <location>
        <begin position="9"/>
        <end position="18"/>
    </location>
    <ligand>
        <name>NADP(+)</name>
        <dbReference type="ChEBI" id="CHEBI:58349"/>
    </ligand>
</feature>
<feature type="binding site" evidence="3">
    <location>
        <position position="142"/>
    </location>
    <ligand>
        <name>substrate</name>
    </ligand>
</feature>
<feature type="sequence variant" id="VAR_035232" description="In dbSNP:rs1122206.">
    <original>H</original>
    <variation>Q</variation>
    <location>
        <position position="136"/>
    </location>
</feature>
<feature type="sequence variant" id="VAR_035233" description="In dbSNP:rs1644731.">
    <original>M</original>
    <variation>T</variation>
    <location>
        <position position="202"/>
    </location>
</feature>
<accession>Q9NYR8</accession>
<accession>Q9H838</accession>
<sequence length="311" mass="33755">MAAAPRTVLISGCSSGIGLELAVQLAHDPKKRYQVVATMRDLGKKETLEAAAGEALGQTLTVAQLDVCSDESVAQCLSCIQGEVDVLVNNAGMGLVGPLEGLSLAAMQNVFDTNFFGAVRLVKAVLPGMKRRRQGHIVVISSVMGLQGVIFNDVYAASKFALEGFFESLAIQLLQFNIFISLVEPGPVVTEFEGKLLAQVSMAEFPGTDPETLHYFRDLYLPASRKLFCSVGQNPQDVVQAIVNVISSTRPPLRRQTNIRYSPLTTLKTVDSSGSLYVRTTHRLLFRCPRLLNLGLQCLSCGCLPTRVRPR</sequence>
<name>RDH8_HUMAN</name>
<proteinExistence type="evidence at protein level"/>
<dbReference type="EC" id="1.1.1.300" evidence="2"/>
<dbReference type="EMBL" id="AF229845">
    <property type="protein sequence ID" value="AAF63160.1"/>
    <property type="molecule type" value="mRNA"/>
</dbReference>
<dbReference type="EMBL" id="AK024022">
    <property type="protein sequence ID" value="BAB14782.1"/>
    <property type="status" value="ALT_FRAME"/>
    <property type="molecule type" value="mRNA"/>
</dbReference>
<dbReference type="CCDS" id="CCDS12223.3"/>
<dbReference type="RefSeq" id="NP_056540.3">
    <property type="nucleotide sequence ID" value="NM_015725.4"/>
</dbReference>
<dbReference type="SMR" id="Q9NYR8"/>
<dbReference type="BioGRID" id="119119">
    <property type="interactions" value="40"/>
</dbReference>
<dbReference type="FunCoup" id="Q9NYR8">
    <property type="interactions" value="107"/>
</dbReference>
<dbReference type="IntAct" id="Q9NYR8">
    <property type="interactions" value="8"/>
</dbReference>
<dbReference type="STRING" id="9606.ENSP00000498711"/>
<dbReference type="DrugBank" id="DB00162">
    <property type="generic name" value="Vitamin A"/>
</dbReference>
<dbReference type="iPTMnet" id="Q9NYR8"/>
<dbReference type="PhosphoSitePlus" id="Q9NYR8"/>
<dbReference type="BioMuta" id="RDH8"/>
<dbReference type="DMDM" id="74753074"/>
<dbReference type="MassIVE" id="Q9NYR8"/>
<dbReference type="PaxDb" id="9606-ENSP00000466058"/>
<dbReference type="PeptideAtlas" id="Q9NYR8"/>
<dbReference type="ProteomicsDB" id="83268"/>
<dbReference type="TopDownProteomics" id="Q9NYR8"/>
<dbReference type="Antibodypedia" id="25134">
    <property type="antibodies" value="21 antibodies from 8 providers"/>
</dbReference>
<dbReference type="DNASU" id="50700"/>
<dbReference type="Ensembl" id="ENST00000591589.3">
    <property type="protein sequence ID" value="ENSP00000466058.2"/>
    <property type="gene ID" value="ENSG00000080511.5"/>
</dbReference>
<dbReference type="GeneID" id="50700"/>
<dbReference type="KEGG" id="hsa:50700"/>
<dbReference type="MANE-Select" id="ENST00000591589.3">
    <property type="protein sequence ID" value="ENSP00000466058.2"/>
    <property type="RefSeq nucleotide sequence ID" value="NM_015725.4"/>
    <property type="RefSeq protein sequence ID" value="NP_056540.3"/>
</dbReference>
<dbReference type="AGR" id="HGNC:14423"/>
<dbReference type="CTD" id="50700"/>
<dbReference type="DisGeNET" id="50700"/>
<dbReference type="GeneCards" id="RDH8"/>
<dbReference type="HGNC" id="HGNC:14423">
    <property type="gene designation" value="RDH8"/>
</dbReference>
<dbReference type="HPA" id="ENSG00000080511">
    <property type="expression patterns" value="Tissue enriched (retina)"/>
</dbReference>
<dbReference type="MIM" id="608575">
    <property type="type" value="gene"/>
</dbReference>
<dbReference type="neXtProt" id="NX_Q9NYR8"/>
<dbReference type="OpenTargets" id="ENSG00000080511"/>
<dbReference type="PharmGKB" id="PA34309"/>
<dbReference type="VEuPathDB" id="HostDB:ENSG00000080511"/>
<dbReference type="eggNOG" id="KOG1205">
    <property type="taxonomic scope" value="Eukaryota"/>
</dbReference>
<dbReference type="GeneTree" id="ENSGT00940000155412"/>
<dbReference type="InParanoid" id="Q9NYR8"/>
<dbReference type="OrthoDB" id="47007at2759"/>
<dbReference type="PAN-GO" id="Q9NYR8">
    <property type="GO annotations" value="3 GO annotations based on evolutionary models"/>
</dbReference>
<dbReference type="PhylomeDB" id="Q9NYR8"/>
<dbReference type="TreeFam" id="TF105451"/>
<dbReference type="BioCyc" id="MetaCyc:HS01358-MONOMER"/>
<dbReference type="BRENDA" id="1.1.1.300">
    <property type="organism ID" value="2681"/>
</dbReference>
<dbReference type="PathwayCommons" id="Q9NYR8"/>
<dbReference type="Reactome" id="R-HSA-2453902">
    <property type="pathway name" value="The canonical retinoid cycle in rods (twilight vision)"/>
</dbReference>
<dbReference type="BioGRID-ORCS" id="50700">
    <property type="hits" value="18 hits in 1143 CRISPR screens"/>
</dbReference>
<dbReference type="ChiTaRS" id="RDH8">
    <property type="organism name" value="human"/>
</dbReference>
<dbReference type="GeneWiki" id="RDH8"/>
<dbReference type="GenomeRNAi" id="50700"/>
<dbReference type="Pharos" id="Q9NYR8">
    <property type="development level" value="Tbio"/>
</dbReference>
<dbReference type="PRO" id="PR:Q9NYR8"/>
<dbReference type="Proteomes" id="UP000005640">
    <property type="component" value="Chromosome 19"/>
</dbReference>
<dbReference type="RNAct" id="Q9NYR8">
    <property type="molecule type" value="protein"/>
</dbReference>
<dbReference type="Bgee" id="ENSG00000080511">
    <property type="expression patterns" value="Expressed in sperm and 66 other cell types or tissues"/>
</dbReference>
<dbReference type="ExpressionAtlas" id="Q9NYR8">
    <property type="expression patterns" value="baseline and differential"/>
</dbReference>
<dbReference type="GO" id="GO:0005829">
    <property type="term" value="C:cytosol"/>
    <property type="evidence" value="ECO:0000318"/>
    <property type="project" value="GO_Central"/>
</dbReference>
<dbReference type="GO" id="GO:0005886">
    <property type="term" value="C:plasma membrane"/>
    <property type="evidence" value="ECO:0000304"/>
    <property type="project" value="ProtInc"/>
</dbReference>
<dbReference type="GO" id="GO:0004745">
    <property type="term" value="F:all-trans-retinol dehydrogenase (NAD+) activity"/>
    <property type="evidence" value="ECO:0000318"/>
    <property type="project" value="GO_Central"/>
</dbReference>
<dbReference type="GO" id="GO:0052650">
    <property type="term" value="F:all-trans-retinol dehydrogenase (NADP+) activity"/>
    <property type="evidence" value="ECO:0007669"/>
    <property type="project" value="UniProtKB-EC"/>
</dbReference>
<dbReference type="GO" id="GO:0004303">
    <property type="term" value="F:estradiol 17-beta-dehydrogenase [NAD(P)+] activity"/>
    <property type="evidence" value="ECO:0007669"/>
    <property type="project" value="InterPro"/>
</dbReference>
<dbReference type="GO" id="GO:0006703">
    <property type="term" value="P:estrogen biosynthetic process"/>
    <property type="evidence" value="ECO:0007669"/>
    <property type="project" value="InterPro"/>
</dbReference>
<dbReference type="GO" id="GO:0042572">
    <property type="term" value="P:retinol metabolic process"/>
    <property type="evidence" value="ECO:0000318"/>
    <property type="project" value="GO_Central"/>
</dbReference>
<dbReference type="GO" id="GO:0006694">
    <property type="term" value="P:steroid biosynthetic process"/>
    <property type="evidence" value="ECO:0000304"/>
    <property type="project" value="ProtInc"/>
</dbReference>
<dbReference type="GO" id="GO:0007601">
    <property type="term" value="P:visual perception"/>
    <property type="evidence" value="ECO:0000304"/>
    <property type="project" value="ProtInc"/>
</dbReference>
<dbReference type="CDD" id="cd09806">
    <property type="entry name" value="type1_17beta-HSD-like_SDR_c"/>
    <property type="match status" value="1"/>
</dbReference>
<dbReference type="FunFam" id="3.40.50.720:FF:000323">
    <property type="entry name" value="Estradiol 17-beta-dehydrogenase 1"/>
    <property type="match status" value="1"/>
</dbReference>
<dbReference type="Gene3D" id="3.40.50.720">
    <property type="entry name" value="NAD(P)-binding Rossmann-like Domain"/>
    <property type="match status" value="1"/>
</dbReference>
<dbReference type="InterPro" id="IPR011348">
    <property type="entry name" value="17beta_DH"/>
</dbReference>
<dbReference type="InterPro" id="IPR036291">
    <property type="entry name" value="NAD(P)-bd_dom_sf"/>
</dbReference>
<dbReference type="InterPro" id="IPR020904">
    <property type="entry name" value="Sc_DH/Rdtase_CS"/>
</dbReference>
<dbReference type="InterPro" id="IPR002347">
    <property type="entry name" value="SDR_fam"/>
</dbReference>
<dbReference type="PANTHER" id="PTHR43391:SF8">
    <property type="entry name" value="RETINOL DEHYDROGENASE 8"/>
    <property type="match status" value="1"/>
</dbReference>
<dbReference type="PANTHER" id="PTHR43391">
    <property type="entry name" value="RETINOL DEHYDROGENASE-RELATED"/>
    <property type="match status" value="1"/>
</dbReference>
<dbReference type="Pfam" id="PF00106">
    <property type="entry name" value="adh_short"/>
    <property type="match status" value="1"/>
</dbReference>
<dbReference type="PIRSF" id="PIRSF000095">
    <property type="entry name" value="17beta-HSD"/>
    <property type="match status" value="1"/>
</dbReference>
<dbReference type="PRINTS" id="PR00081">
    <property type="entry name" value="GDHRDH"/>
</dbReference>
<dbReference type="PRINTS" id="PR00080">
    <property type="entry name" value="SDRFAMILY"/>
</dbReference>
<dbReference type="SUPFAM" id="SSF51735">
    <property type="entry name" value="NAD(P)-binding Rossmann-fold domains"/>
    <property type="match status" value="1"/>
</dbReference>
<dbReference type="PROSITE" id="PS00061">
    <property type="entry name" value="ADH_SHORT"/>
    <property type="match status" value="1"/>
</dbReference>
<protein>
    <recommendedName>
        <fullName>Retinol dehydrogenase 8</fullName>
        <ecNumber evidence="2">1.1.1.300</ecNumber>
    </recommendedName>
    <alternativeName>
        <fullName>Photoreceptor outer segment all-trans retinol dehydrogenase</fullName>
    </alternativeName>
    <alternativeName>
        <fullName>Short chain dehydrogenase/reductase family 28C member 2</fullName>
    </alternativeName>
</protein>
<organism>
    <name type="scientific">Homo sapiens</name>
    <name type="common">Human</name>
    <dbReference type="NCBI Taxonomy" id="9606"/>
    <lineage>
        <taxon>Eukaryota</taxon>
        <taxon>Metazoa</taxon>
        <taxon>Chordata</taxon>
        <taxon>Craniata</taxon>
        <taxon>Vertebrata</taxon>
        <taxon>Euteleostomi</taxon>
        <taxon>Mammalia</taxon>
        <taxon>Eutheria</taxon>
        <taxon>Euarchontoglires</taxon>
        <taxon>Primates</taxon>
        <taxon>Haplorrhini</taxon>
        <taxon>Catarrhini</taxon>
        <taxon>Hominidae</taxon>
        <taxon>Homo</taxon>
    </lineage>
</organism>